<organism>
    <name type="scientific">Mycoplasma mobile (strain ATCC 43663 / 163K / NCTC 11711)</name>
    <name type="common">Mesomycoplasma mobile</name>
    <dbReference type="NCBI Taxonomy" id="267748"/>
    <lineage>
        <taxon>Bacteria</taxon>
        <taxon>Bacillati</taxon>
        <taxon>Mycoplasmatota</taxon>
        <taxon>Mycoplasmoidales</taxon>
        <taxon>Metamycoplasmataceae</taxon>
        <taxon>Mesomycoplasma</taxon>
    </lineage>
</organism>
<evidence type="ECO:0000255" key="1">
    <source>
        <dbReference type="HAMAP-Rule" id="MF_01804"/>
    </source>
</evidence>
<dbReference type="EMBL" id="AE017308">
    <property type="protein sequence ID" value="AAT27962.1"/>
    <property type="molecule type" value="Genomic_DNA"/>
</dbReference>
<dbReference type="RefSeq" id="WP_011264996.1">
    <property type="nucleotide sequence ID" value="NC_006908.1"/>
</dbReference>
<dbReference type="SMR" id="Q6KHG8"/>
<dbReference type="STRING" id="267748.MMOB4760"/>
<dbReference type="KEGG" id="mmo:MMOB4760"/>
<dbReference type="eggNOG" id="COG1386">
    <property type="taxonomic scope" value="Bacteria"/>
</dbReference>
<dbReference type="HOGENOM" id="CLU_045647_5_3_14"/>
<dbReference type="OrthoDB" id="9806226at2"/>
<dbReference type="Proteomes" id="UP000009072">
    <property type="component" value="Chromosome"/>
</dbReference>
<dbReference type="GO" id="GO:0005737">
    <property type="term" value="C:cytoplasm"/>
    <property type="evidence" value="ECO:0007669"/>
    <property type="project" value="UniProtKB-SubCell"/>
</dbReference>
<dbReference type="GO" id="GO:0051301">
    <property type="term" value="P:cell division"/>
    <property type="evidence" value="ECO:0007669"/>
    <property type="project" value="UniProtKB-KW"/>
</dbReference>
<dbReference type="GO" id="GO:0051304">
    <property type="term" value="P:chromosome separation"/>
    <property type="evidence" value="ECO:0007669"/>
    <property type="project" value="InterPro"/>
</dbReference>
<dbReference type="GO" id="GO:0006260">
    <property type="term" value="P:DNA replication"/>
    <property type="evidence" value="ECO:0007669"/>
    <property type="project" value="UniProtKB-UniRule"/>
</dbReference>
<dbReference type="Gene3D" id="1.10.10.10">
    <property type="entry name" value="Winged helix-like DNA-binding domain superfamily/Winged helix DNA-binding domain"/>
    <property type="match status" value="2"/>
</dbReference>
<dbReference type="HAMAP" id="MF_01804">
    <property type="entry name" value="ScpB"/>
    <property type="match status" value="1"/>
</dbReference>
<dbReference type="InterPro" id="IPR005234">
    <property type="entry name" value="ScpB_csome_segregation"/>
</dbReference>
<dbReference type="InterPro" id="IPR036388">
    <property type="entry name" value="WH-like_DNA-bd_sf"/>
</dbReference>
<dbReference type="InterPro" id="IPR036390">
    <property type="entry name" value="WH_DNA-bd_sf"/>
</dbReference>
<dbReference type="NCBIfam" id="TIGR00281">
    <property type="entry name" value="SMC-Scp complex subunit ScpB"/>
    <property type="match status" value="1"/>
</dbReference>
<dbReference type="PANTHER" id="PTHR34298">
    <property type="entry name" value="SEGREGATION AND CONDENSATION PROTEIN B"/>
    <property type="match status" value="1"/>
</dbReference>
<dbReference type="PANTHER" id="PTHR34298:SF2">
    <property type="entry name" value="SEGREGATION AND CONDENSATION PROTEIN B"/>
    <property type="match status" value="1"/>
</dbReference>
<dbReference type="Pfam" id="PF04079">
    <property type="entry name" value="SMC_ScpB"/>
    <property type="match status" value="1"/>
</dbReference>
<dbReference type="PIRSF" id="PIRSF019345">
    <property type="entry name" value="ScpB"/>
    <property type="match status" value="1"/>
</dbReference>
<dbReference type="SUPFAM" id="SSF46785">
    <property type="entry name" value="Winged helix' DNA-binding domain"/>
    <property type="match status" value="2"/>
</dbReference>
<accession>Q6KHG8</accession>
<sequence length="192" mass="21810">MNNKIIEALIYIQGEEGLSSEQLQKVLKSESISSARALLKVFKEKWNNEQHGIKVEEFNDVYKFATIKDVKDYVSELVTIIKKQRLSNAAIEVAGIVAYKQPISKSQINKIRGVASEIVVNTLLIKGIIEEVGIAQTPGNPILYGVTAKFYDYFKIKSLHELPNLKEFDDTGEYESIEDFDLYSSQREDQDE</sequence>
<reference key="1">
    <citation type="journal article" date="2004" name="Genome Res.">
        <title>The complete genome and proteome of Mycoplasma mobile.</title>
        <authorList>
            <person name="Jaffe J.D."/>
            <person name="Stange-Thomann N."/>
            <person name="Smith C."/>
            <person name="DeCaprio D."/>
            <person name="Fisher S."/>
            <person name="Butler J."/>
            <person name="Calvo S."/>
            <person name="Elkins T."/>
            <person name="FitzGerald M.G."/>
            <person name="Hafez N."/>
            <person name="Kodira C.D."/>
            <person name="Major J."/>
            <person name="Wang S."/>
            <person name="Wilkinson J."/>
            <person name="Nicol R."/>
            <person name="Nusbaum C."/>
            <person name="Birren B."/>
            <person name="Berg H.C."/>
            <person name="Church G.M."/>
        </authorList>
    </citation>
    <scope>NUCLEOTIDE SEQUENCE [LARGE SCALE GENOMIC DNA]</scope>
    <source>
        <strain>ATCC 43663 / NCTC 11711 / 163 K</strain>
    </source>
</reference>
<name>SCPB_MYCM1</name>
<keyword id="KW-0131">Cell cycle</keyword>
<keyword id="KW-0132">Cell division</keyword>
<keyword id="KW-0159">Chromosome partition</keyword>
<keyword id="KW-0963">Cytoplasm</keyword>
<keyword id="KW-1185">Reference proteome</keyword>
<protein>
    <recommendedName>
        <fullName evidence="1">Segregation and condensation protein B</fullName>
    </recommendedName>
</protein>
<feature type="chain" id="PRO_0000211140" description="Segregation and condensation protein B">
    <location>
        <begin position="1"/>
        <end position="192"/>
    </location>
</feature>
<proteinExistence type="inferred from homology"/>
<comment type="function">
    <text evidence="1">Participates in chromosomal partition during cell division. May act via the formation of a condensin-like complex containing Smc and ScpA that pull DNA away from mid-cell into both cell halves.</text>
</comment>
<comment type="subunit">
    <text evidence="1">Homodimer. Homodimerization may be required to stabilize the binding of ScpA to the Smc head domains. Component of a cohesin-like complex composed of ScpA, ScpB and the Smc homodimer, in which ScpA and ScpB bind to the head domain of Smc. The presence of the three proteins is required for the association of the complex with DNA.</text>
</comment>
<comment type="subcellular location">
    <subcellularLocation>
        <location evidence="1">Cytoplasm</location>
    </subcellularLocation>
    <text evidence="1">Associated with two foci at the outer edges of the nucleoid region in young cells, and at four foci within both cell halves in older cells.</text>
</comment>
<comment type="similarity">
    <text evidence="1">Belongs to the ScpB family.</text>
</comment>
<gene>
    <name evidence="1" type="primary">scpB</name>
    <name type="ordered locus">MMOB4760</name>
</gene>